<dbReference type="SMR" id="P0DMT4"/>
<dbReference type="GO" id="GO:0005576">
    <property type="term" value="C:extracellular region"/>
    <property type="evidence" value="ECO:0007669"/>
    <property type="project" value="UniProtKB-SubCell"/>
</dbReference>
<dbReference type="GO" id="GO:0005246">
    <property type="term" value="F:calcium channel regulator activity"/>
    <property type="evidence" value="ECO:0007669"/>
    <property type="project" value="UniProtKB-KW"/>
</dbReference>
<dbReference type="GO" id="GO:0090729">
    <property type="term" value="F:toxin activity"/>
    <property type="evidence" value="ECO:0007669"/>
    <property type="project" value="UniProtKB-KW"/>
</dbReference>
<dbReference type="CDD" id="cd05383">
    <property type="entry name" value="CAP_CRISP"/>
    <property type="match status" value="1"/>
</dbReference>
<dbReference type="FunFam" id="1.10.10.740:FF:000001">
    <property type="entry name" value="Cysteine-rich secretory protein 2"/>
    <property type="match status" value="1"/>
</dbReference>
<dbReference type="FunFam" id="3.40.33.10:FF:000005">
    <property type="entry name" value="Cysteine-rich secretory protein 2"/>
    <property type="match status" value="1"/>
</dbReference>
<dbReference type="Gene3D" id="3.40.33.10">
    <property type="entry name" value="CAP"/>
    <property type="match status" value="1"/>
</dbReference>
<dbReference type="Gene3D" id="1.10.10.740">
    <property type="entry name" value="Crisp domain"/>
    <property type="match status" value="1"/>
</dbReference>
<dbReference type="InterPro" id="IPR018244">
    <property type="entry name" value="Allrgn_V5/Tpx1_CS"/>
</dbReference>
<dbReference type="InterPro" id="IPR014044">
    <property type="entry name" value="CAP_dom"/>
</dbReference>
<dbReference type="InterPro" id="IPR035940">
    <property type="entry name" value="CAP_sf"/>
</dbReference>
<dbReference type="InterPro" id="IPR042076">
    <property type="entry name" value="Crisp-like_dom"/>
</dbReference>
<dbReference type="InterPro" id="IPR001283">
    <property type="entry name" value="CRISP-related"/>
</dbReference>
<dbReference type="InterPro" id="IPR013871">
    <property type="entry name" value="Cysteine_rich_secretory"/>
</dbReference>
<dbReference type="InterPro" id="IPR034117">
    <property type="entry name" value="SCP_CRISP"/>
</dbReference>
<dbReference type="InterPro" id="IPR003582">
    <property type="entry name" value="ShKT_dom"/>
</dbReference>
<dbReference type="InterPro" id="IPR002413">
    <property type="entry name" value="V5_allergen-like"/>
</dbReference>
<dbReference type="PANTHER" id="PTHR10334">
    <property type="entry name" value="CYSTEINE-RICH SECRETORY PROTEIN-RELATED"/>
    <property type="match status" value="1"/>
</dbReference>
<dbReference type="Pfam" id="PF00188">
    <property type="entry name" value="CAP"/>
    <property type="match status" value="1"/>
</dbReference>
<dbReference type="Pfam" id="PF08562">
    <property type="entry name" value="Crisp"/>
    <property type="match status" value="1"/>
</dbReference>
<dbReference type="PRINTS" id="PR00838">
    <property type="entry name" value="V5ALLERGEN"/>
</dbReference>
<dbReference type="PRINTS" id="PR00837">
    <property type="entry name" value="V5TPXLIKE"/>
</dbReference>
<dbReference type="SMART" id="SM00198">
    <property type="entry name" value="SCP"/>
    <property type="match status" value="1"/>
</dbReference>
<dbReference type="SUPFAM" id="SSF57546">
    <property type="entry name" value="Crisp domain-like"/>
    <property type="match status" value="1"/>
</dbReference>
<dbReference type="SUPFAM" id="SSF55797">
    <property type="entry name" value="PR-1-like"/>
    <property type="match status" value="1"/>
</dbReference>
<dbReference type="PROSITE" id="PS01009">
    <property type="entry name" value="CRISP_1"/>
    <property type="match status" value="1"/>
</dbReference>
<dbReference type="PROSITE" id="PS01010">
    <property type="entry name" value="CRISP_2"/>
    <property type="match status" value="1"/>
</dbReference>
<dbReference type="PROSITE" id="PS51670">
    <property type="entry name" value="SHKT"/>
    <property type="match status" value="1"/>
</dbReference>
<proteinExistence type="evidence at protein level"/>
<reference key="1">
    <citation type="journal article" date="2013" name="Toxicon">
        <title>Cytotoxic activities of [Ser49]phospholipase A(2) from the venom of the saw-scaled vipers Echis ocellatus, Echis pyramidum leakeyi, Echis carinatus sochureki, and Echis coloratus.</title>
        <authorList>
            <person name="Conlon J.M."/>
            <person name="Attoub S."/>
            <person name="Arafat H."/>
            <person name="Mechkarska M."/>
            <person name="Casewell N.R."/>
            <person name="Harrison R.A."/>
            <person name="Calvete J.J."/>
        </authorList>
    </citation>
    <scope>NUCLEOTIDE SEQUENCE [MRNA]</scope>
    <scope>MASS SPECTROMETRY</scope>
    <scope>SUBCELLULAR LOCATION</scope>
    <source>
        <tissue>Venom</tissue>
        <tissue>Venom gland</tissue>
    </source>
</reference>
<protein>
    <recommendedName>
        <fullName>Cysteine-rich venom protein</fullName>
        <shortName>CRVP</shortName>
    </recommendedName>
    <alternativeName>
        <fullName>ECO_00025</fullName>
    </alternativeName>
</protein>
<organism>
    <name type="scientific">Echis coloratus</name>
    <name type="common">Carpet viper</name>
    <dbReference type="NCBI Taxonomy" id="64175"/>
    <lineage>
        <taxon>Eukaryota</taxon>
        <taxon>Metazoa</taxon>
        <taxon>Chordata</taxon>
        <taxon>Craniata</taxon>
        <taxon>Vertebrata</taxon>
        <taxon>Euteleostomi</taxon>
        <taxon>Lepidosauria</taxon>
        <taxon>Squamata</taxon>
        <taxon>Bifurcata</taxon>
        <taxon>Unidentata</taxon>
        <taxon>Episquamata</taxon>
        <taxon>Toxicofera</taxon>
        <taxon>Serpentes</taxon>
        <taxon>Colubroidea</taxon>
        <taxon>Viperidae</taxon>
        <taxon>Viperinae</taxon>
        <taxon>Echis</taxon>
    </lineage>
</organism>
<feature type="chain" id="PRO_0000432599" description="Cysteine-rich venom protein" evidence="2">
    <location>
        <begin position="1"/>
        <end position="220"/>
    </location>
</feature>
<feature type="domain" description="SCP" evidence="2">
    <location>
        <begin position="20"/>
        <end position="147"/>
    </location>
</feature>
<feature type="domain" description="ShKT" evidence="3">
    <location>
        <begin position="183"/>
        <end position="215"/>
    </location>
</feature>
<feature type="disulfide bond" evidence="1">
    <location>
        <begin position="56"/>
        <end position="134"/>
    </location>
</feature>
<feature type="disulfide bond" evidence="1">
    <location>
        <begin position="73"/>
        <end position="148"/>
    </location>
</feature>
<feature type="disulfide bond" evidence="1">
    <location>
        <begin position="129"/>
        <end position="145"/>
    </location>
</feature>
<feature type="disulfide bond" evidence="1">
    <location>
        <begin position="167"/>
        <end position="174"/>
    </location>
</feature>
<feature type="disulfide bond" evidence="1">
    <location>
        <begin position="170"/>
        <end position="179"/>
    </location>
</feature>
<feature type="disulfide bond" evidence="1">
    <location>
        <begin position="183"/>
        <end position="215"/>
    </location>
</feature>
<feature type="disulfide bond" evidence="1">
    <location>
        <begin position="192"/>
        <end position="209"/>
    </location>
</feature>
<feature type="disulfide bond" evidence="1">
    <location>
        <begin position="200"/>
        <end position="213"/>
    </location>
</feature>
<comment type="function">
    <text evidence="1">Blocks contraction of smooth muscle elicited by high potassium-induced depolarization, but does not block caffeine-stimulated contraction. May target voltage-gated calcium channels in smooth muscle.</text>
</comment>
<comment type="subcellular location">
    <subcellularLocation>
        <location evidence="1">Secreted</location>
    </subcellularLocation>
</comment>
<comment type="tissue specificity">
    <text evidence="5">Expressed by the venom gland.</text>
</comment>
<comment type="mass spectrometry" mass="24682.0" method="Electrospray" evidence="4"/>
<comment type="similarity">
    <text evidence="5">Belongs to the CRISP family.</text>
</comment>
<name>CRVP_ECHCO</name>
<accession>P0DMT4</accession>
<evidence type="ECO:0000250" key="1"/>
<evidence type="ECO:0000250" key="2">
    <source>
        <dbReference type="UniProtKB" id="B7FDI0"/>
    </source>
</evidence>
<evidence type="ECO:0000255" key="3">
    <source>
        <dbReference type="PROSITE-ProRule" id="PRU01005"/>
    </source>
</evidence>
<evidence type="ECO:0000269" key="4">
    <source>
    </source>
</evidence>
<evidence type="ECO:0000305" key="5"/>
<sequence length="220" mass="24699">NVDFDSESPRKPEIQNEIIDLHNSLRRSVNPTASNMLRMEWYPEAAANAERWAFRCTLNHSPRDSRVIDGIKCGENIYMSPYPIKWTAIIHKWHDEKKNFVYGIGASPANAVIGHYTQIVWYKSYRGGCAAAYCPSSAYKYFYVCQYCPAGNIIGKTATPYKSGPPCGDCPSACDNGLCTNPCTREDEFINCNDLVKQGCQTDYLKSNCAASCFCHSEIK</sequence>
<keyword id="KW-0108">Calcium channel impairing toxin</keyword>
<keyword id="KW-1015">Disulfide bond</keyword>
<keyword id="KW-0872">Ion channel impairing toxin</keyword>
<keyword id="KW-0528">Neurotoxin</keyword>
<keyword id="KW-0964">Secreted</keyword>
<keyword id="KW-0800">Toxin</keyword>